<sequence length="147" mass="16256">MKTFVPKNNEQNWVVVDAAGVPLGRLATLVASRIRGKHRPDFTPNIIQGDFVVVVNAEKVVLTGNKLDGKVYTRYTGYQGGLKTETARQALAKHPERVIEHAVFGMLPKGRQGRALHSRLKVYAGTTHPHAAQKPQQLEVRTALEVK</sequence>
<gene>
    <name evidence="1" type="primary">rplM</name>
    <name type="ordered locus">Dgeo_1734</name>
</gene>
<evidence type="ECO:0000255" key="1">
    <source>
        <dbReference type="HAMAP-Rule" id="MF_01366"/>
    </source>
</evidence>
<evidence type="ECO:0000305" key="2"/>
<keyword id="KW-0687">Ribonucleoprotein</keyword>
<keyword id="KW-0689">Ribosomal protein</keyword>
<proteinExistence type="inferred from homology"/>
<organism>
    <name type="scientific">Deinococcus geothermalis (strain DSM 11300 / CIP 105573 / AG-3a)</name>
    <dbReference type="NCBI Taxonomy" id="319795"/>
    <lineage>
        <taxon>Bacteria</taxon>
        <taxon>Thermotogati</taxon>
        <taxon>Deinococcota</taxon>
        <taxon>Deinococci</taxon>
        <taxon>Deinococcales</taxon>
        <taxon>Deinococcaceae</taxon>
        <taxon>Deinococcus</taxon>
    </lineage>
</organism>
<protein>
    <recommendedName>
        <fullName evidence="1">Large ribosomal subunit protein uL13</fullName>
    </recommendedName>
    <alternativeName>
        <fullName evidence="2">50S ribosomal protein L13</fullName>
    </alternativeName>
</protein>
<feature type="chain" id="PRO_1000055376" description="Large ribosomal subunit protein uL13">
    <location>
        <begin position="1"/>
        <end position="147"/>
    </location>
</feature>
<dbReference type="EMBL" id="CP000359">
    <property type="protein sequence ID" value="ABF46029.1"/>
    <property type="molecule type" value="Genomic_DNA"/>
</dbReference>
<dbReference type="RefSeq" id="WP_011530860.1">
    <property type="nucleotide sequence ID" value="NC_008025.1"/>
</dbReference>
<dbReference type="SMR" id="Q1IXK5"/>
<dbReference type="STRING" id="319795.Dgeo_1734"/>
<dbReference type="KEGG" id="dge:Dgeo_1734"/>
<dbReference type="eggNOG" id="COG0102">
    <property type="taxonomic scope" value="Bacteria"/>
</dbReference>
<dbReference type="HOGENOM" id="CLU_082184_2_2_0"/>
<dbReference type="Proteomes" id="UP000002431">
    <property type="component" value="Chromosome"/>
</dbReference>
<dbReference type="GO" id="GO:0022625">
    <property type="term" value="C:cytosolic large ribosomal subunit"/>
    <property type="evidence" value="ECO:0007669"/>
    <property type="project" value="TreeGrafter"/>
</dbReference>
<dbReference type="GO" id="GO:0003729">
    <property type="term" value="F:mRNA binding"/>
    <property type="evidence" value="ECO:0007669"/>
    <property type="project" value="TreeGrafter"/>
</dbReference>
<dbReference type="GO" id="GO:0003735">
    <property type="term" value="F:structural constituent of ribosome"/>
    <property type="evidence" value="ECO:0007669"/>
    <property type="project" value="InterPro"/>
</dbReference>
<dbReference type="GO" id="GO:0017148">
    <property type="term" value="P:negative regulation of translation"/>
    <property type="evidence" value="ECO:0007669"/>
    <property type="project" value="TreeGrafter"/>
</dbReference>
<dbReference type="GO" id="GO:0006412">
    <property type="term" value="P:translation"/>
    <property type="evidence" value="ECO:0007669"/>
    <property type="project" value="UniProtKB-UniRule"/>
</dbReference>
<dbReference type="CDD" id="cd00392">
    <property type="entry name" value="Ribosomal_L13"/>
    <property type="match status" value="1"/>
</dbReference>
<dbReference type="FunFam" id="3.90.1180.10:FF:000001">
    <property type="entry name" value="50S ribosomal protein L13"/>
    <property type="match status" value="1"/>
</dbReference>
<dbReference type="Gene3D" id="3.90.1180.10">
    <property type="entry name" value="Ribosomal protein L13"/>
    <property type="match status" value="1"/>
</dbReference>
<dbReference type="HAMAP" id="MF_01366">
    <property type="entry name" value="Ribosomal_uL13"/>
    <property type="match status" value="1"/>
</dbReference>
<dbReference type="InterPro" id="IPR005822">
    <property type="entry name" value="Ribosomal_uL13"/>
</dbReference>
<dbReference type="InterPro" id="IPR005823">
    <property type="entry name" value="Ribosomal_uL13_bac-type"/>
</dbReference>
<dbReference type="InterPro" id="IPR023563">
    <property type="entry name" value="Ribosomal_uL13_CS"/>
</dbReference>
<dbReference type="InterPro" id="IPR036899">
    <property type="entry name" value="Ribosomal_uL13_sf"/>
</dbReference>
<dbReference type="NCBIfam" id="TIGR01066">
    <property type="entry name" value="rplM_bact"/>
    <property type="match status" value="1"/>
</dbReference>
<dbReference type="PANTHER" id="PTHR11545:SF2">
    <property type="entry name" value="LARGE RIBOSOMAL SUBUNIT PROTEIN UL13M"/>
    <property type="match status" value="1"/>
</dbReference>
<dbReference type="PANTHER" id="PTHR11545">
    <property type="entry name" value="RIBOSOMAL PROTEIN L13"/>
    <property type="match status" value="1"/>
</dbReference>
<dbReference type="Pfam" id="PF00572">
    <property type="entry name" value="Ribosomal_L13"/>
    <property type="match status" value="1"/>
</dbReference>
<dbReference type="PIRSF" id="PIRSF002181">
    <property type="entry name" value="Ribosomal_L13"/>
    <property type="match status" value="1"/>
</dbReference>
<dbReference type="SUPFAM" id="SSF52161">
    <property type="entry name" value="Ribosomal protein L13"/>
    <property type="match status" value="1"/>
</dbReference>
<dbReference type="PROSITE" id="PS00783">
    <property type="entry name" value="RIBOSOMAL_L13"/>
    <property type="match status" value="1"/>
</dbReference>
<comment type="function">
    <text evidence="1">This protein is one of the early assembly proteins of the 50S ribosomal subunit, although it is not seen to bind rRNA by itself. It is important during the early stages of 50S assembly.</text>
</comment>
<comment type="subunit">
    <text evidence="1">Part of the 50S ribosomal subunit.</text>
</comment>
<comment type="similarity">
    <text evidence="1">Belongs to the universal ribosomal protein uL13 family.</text>
</comment>
<accession>Q1IXK5</accession>
<reference key="1">
    <citation type="submission" date="2006-04" db="EMBL/GenBank/DDBJ databases">
        <title>Complete sequence of chromosome of Deinococcus geothermalis DSM 11300.</title>
        <authorList>
            <person name="Copeland A."/>
            <person name="Lucas S."/>
            <person name="Lapidus A."/>
            <person name="Barry K."/>
            <person name="Detter J.C."/>
            <person name="Glavina del Rio T."/>
            <person name="Hammon N."/>
            <person name="Israni S."/>
            <person name="Dalin E."/>
            <person name="Tice H."/>
            <person name="Pitluck S."/>
            <person name="Brettin T."/>
            <person name="Bruce D."/>
            <person name="Han C."/>
            <person name="Tapia R."/>
            <person name="Saunders E."/>
            <person name="Gilna P."/>
            <person name="Schmutz J."/>
            <person name="Larimer F."/>
            <person name="Land M."/>
            <person name="Hauser L."/>
            <person name="Kyrpides N."/>
            <person name="Kim E."/>
            <person name="Daly M.J."/>
            <person name="Fredrickson J.K."/>
            <person name="Makarova K.S."/>
            <person name="Gaidamakova E.K."/>
            <person name="Zhai M."/>
            <person name="Richardson P."/>
        </authorList>
    </citation>
    <scope>NUCLEOTIDE SEQUENCE [LARGE SCALE GENOMIC DNA]</scope>
    <source>
        <strain>DSM 11300 / CIP 105573 / AG-3a</strain>
    </source>
</reference>
<name>RL13_DEIGD</name>